<sequence>MRGAYYIITALLVVASSQELRGSGHQLQIYDHDVVKAVKAVMKTLPNRFLRESRDVHDDLANEERSFYSILADIINKGMDTMPRAAEGVELMPNAAEGVEKMPRAAEGVETIPHAAEGVENMPHVPDEGLSKALTGAKTALNKLWGPFSATTPIGDASHDVSSREQIDFEIGSWSIDLRGFKPIAVHDQHKDMIQRVYTKFGQLCGNNLNPTAEETSLIWTMFDSRIVPSSSKDDRLKLIWQARQNVRSDMRSISSSKKWRYRWQGSPDSLTLDVLNSLLNMHYQRWVRMYDIFKQERPDLIDAPSNSKHTLGGNKDSSSATTLHKHSKGLSSRPFEPLNAVMMSHGDRFVSTQRSKRTFGSNADTVSLPLKQPKMRSSKALMPLSATLGDYSVPPLKSRLNFGGASSAFVPYTHPKAHTSKSLAPASTTLTLKDSELELSLGGIYDKNTG</sequence>
<protein>
    <recommendedName>
        <fullName evidence="4">Secreted RxLR effector protein 70</fullName>
    </recommendedName>
</protein>
<organism>
    <name type="scientific">Plasmopara viticola</name>
    <name type="common">Downy mildew of grapevine</name>
    <name type="synonym">Botrytis viticola</name>
    <dbReference type="NCBI Taxonomy" id="143451"/>
    <lineage>
        <taxon>Eukaryota</taxon>
        <taxon>Sar</taxon>
        <taxon>Stramenopiles</taxon>
        <taxon>Oomycota</taxon>
        <taxon>Peronosporales</taxon>
        <taxon>Peronosporaceae</taxon>
        <taxon>Plasmopara</taxon>
    </lineage>
</organism>
<evidence type="ECO:0000255" key="1"/>
<evidence type="ECO:0000256" key="2">
    <source>
        <dbReference type="SAM" id="MobiDB-lite"/>
    </source>
</evidence>
<evidence type="ECO:0000269" key="3">
    <source>
    </source>
</evidence>
<evidence type="ECO:0000303" key="4">
    <source>
    </source>
</evidence>
<evidence type="ECO:0000305" key="5"/>
<evidence type="ECO:0000305" key="6">
    <source>
    </source>
</evidence>
<name>RLR70_PLAVT</name>
<feature type="signal peptide" evidence="1">
    <location>
        <begin position="1"/>
        <end position="17"/>
    </location>
</feature>
<feature type="chain" id="PRO_0000447930" description="Secreted RxLR effector protein 70">
    <location>
        <begin position="18"/>
        <end position="451"/>
    </location>
</feature>
<feature type="region of interest" description="Disordered" evidence="2">
    <location>
        <begin position="303"/>
        <end position="336"/>
    </location>
</feature>
<feature type="short sequence motif" description="RxLR-dEER" evidence="6">
    <location>
        <begin position="48"/>
        <end position="65"/>
    </location>
</feature>
<feature type="compositionally biased region" description="Polar residues" evidence="2">
    <location>
        <begin position="305"/>
        <end position="323"/>
    </location>
</feature>
<comment type="function">
    <text evidence="3">Secreted effector that completely suppresses the host cell death induced by cell death-inducing proteins.</text>
</comment>
<comment type="subcellular location">
    <subcellularLocation>
        <location evidence="3">Secreted</location>
    </subcellularLocation>
    <subcellularLocation>
        <location evidence="3">Host nucleus</location>
    </subcellularLocation>
</comment>
<comment type="domain">
    <text evidence="6">The RxLR-dEER motif acts to carry the protein into the host cell cytoplasm through binding to cell surface phosphatidylinositol-3-phosphate.</text>
</comment>
<comment type="similarity">
    <text evidence="5">Belongs to the RxLR effector family.</text>
</comment>
<accession>P0CV21</accession>
<gene>
    <name evidence="4" type="primary">RXLR70</name>
</gene>
<reference key="1">
    <citation type="journal article" date="2018" name="Front. Plant Sci.">
        <title>In planta functional analysis and subcellular localization of the oomycete pathogen Plasmopara viticola candidate RXLR effector repertoire.</title>
        <authorList>
            <person name="Liu Y."/>
            <person name="Lan X."/>
            <person name="Song S."/>
            <person name="Yin L."/>
            <person name="Dry I.B."/>
            <person name="Qu J."/>
            <person name="Xiang J."/>
            <person name="Lu J."/>
        </authorList>
    </citation>
    <scope>NUCLEOTIDE SEQUENCE [MRNA]</scope>
    <scope>DOMAIN</scope>
    <scope>FUNCTION</scope>
    <scope>SUBCELLULAR LOCATION</scope>
</reference>
<keyword id="KW-1048">Host nucleus</keyword>
<keyword id="KW-0964">Secreted</keyword>
<keyword id="KW-0732">Signal</keyword>
<keyword id="KW-0843">Virulence</keyword>
<dbReference type="GO" id="GO:0005576">
    <property type="term" value="C:extracellular region"/>
    <property type="evidence" value="ECO:0007669"/>
    <property type="project" value="UniProtKB-SubCell"/>
</dbReference>
<dbReference type="GO" id="GO:0042025">
    <property type="term" value="C:host cell nucleus"/>
    <property type="evidence" value="ECO:0007669"/>
    <property type="project" value="UniProtKB-SubCell"/>
</dbReference>
<proteinExistence type="evidence at transcript level"/>